<accession>Q8N0V1</accession>
<dbReference type="EMBL" id="AP001620">
    <property type="status" value="NOT_ANNOTATED_CDS"/>
    <property type="molecule type" value="Genomic_DNA"/>
</dbReference>
<dbReference type="EMBL" id="BC029588">
    <property type="status" value="NOT_ANNOTATED_CDS"/>
    <property type="molecule type" value="mRNA"/>
</dbReference>
<dbReference type="BioMuta" id="HGNC:23130"/>
<dbReference type="AGR" id="HGNC:23130"/>
<dbReference type="GeneCards" id="ZNF295-AS1"/>
<dbReference type="HGNC" id="HGNC:23130">
    <property type="gene designation" value="ZNF295-AS1"/>
</dbReference>
<dbReference type="neXtProt" id="NX_Q8N0V1"/>
<dbReference type="InParanoid" id="Q8N0V1"/>
<dbReference type="PAN-GO" id="Q8N0V1">
    <property type="GO annotations" value="0 GO annotations based on evolutionary models"/>
</dbReference>
<dbReference type="PathwayCommons" id="Q8N0V1"/>
<dbReference type="SignaLink" id="Q8N0V1"/>
<dbReference type="Pharos" id="Q8N0V1">
    <property type="development level" value="Tdark"/>
</dbReference>
<dbReference type="Proteomes" id="UP000005640">
    <property type="component" value="Unplaced"/>
</dbReference>
<dbReference type="RNAct" id="Q8N0V1">
    <property type="molecule type" value="protein"/>
</dbReference>
<reference key="1">
    <citation type="journal article" date="2000" name="Nature">
        <title>The DNA sequence of human chromosome 21.</title>
        <authorList>
            <person name="Hattori M."/>
            <person name="Fujiyama A."/>
            <person name="Taylor T.D."/>
            <person name="Watanabe H."/>
            <person name="Yada T."/>
            <person name="Park H.-S."/>
            <person name="Toyoda A."/>
            <person name="Ishii K."/>
            <person name="Totoki Y."/>
            <person name="Choi D.-K."/>
            <person name="Groner Y."/>
            <person name="Soeda E."/>
            <person name="Ohki M."/>
            <person name="Takagi T."/>
            <person name="Sakaki Y."/>
            <person name="Taudien S."/>
            <person name="Blechschmidt K."/>
            <person name="Polley A."/>
            <person name="Menzel U."/>
            <person name="Delabar J."/>
            <person name="Kumpf K."/>
            <person name="Lehmann R."/>
            <person name="Patterson D."/>
            <person name="Reichwald K."/>
            <person name="Rump A."/>
            <person name="Schillhabel M."/>
            <person name="Schudy A."/>
            <person name="Zimmermann W."/>
            <person name="Rosenthal A."/>
            <person name="Kudoh J."/>
            <person name="Shibuya K."/>
            <person name="Kawasaki K."/>
            <person name="Asakawa S."/>
            <person name="Shintani A."/>
            <person name="Sasaki T."/>
            <person name="Nagamine K."/>
            <person name="Mitsuyama S."/>
            <person name="Antonarakis S.E."/>
            <person name="Minoshima S."/>
            <person name="Shimizu N."/>
            <person name="Nordsiek G."/>
            <person name="Hornischer K."/>
            <person name="Brandt P."/>
            <person name="Scharfe M."/>
            <person name="Schoen O."/>
            <person name="Desario A."/>
            <person name="Reichelt J."/>
            <person name="Kauer G."/>
            <person name="Bloecker H."/>
            <person name="Ramser J."/>
            <person name="Beck A."/>
            <person name="Klages S."/>
            <person name="Hennig S."/>
            <person name="Riesselmann L."/>
            <person name="Dagand E."/>
            <person name="Wehrmeyer S."/>
            <person name="Borzym K."/>
            <person name="Gardiner K."/>
            <person name="Nizetic D."/>
            <person name="Francis F."/>
            <person name="Lehrach H."/>
            <person name="Reinhardt R."/>
            <person name="Yaspo M.-L."/>
        </authorList>
    </citation>
    <scope>NUCLEOTIDE SEQUENCE [LARGE SCALE GENOMIC DNA]</scope>
</reference>
<reference key="2">
    <citation type="journal article" date="2004" name="Genome Res.">
        <title>The status, quality, and expansion of the NIH full-length cDNA project: the Mammalian Gene Collection (MGC).</title>
        <authorList>
            <consortium name="The MGC Project Team"/>
        </authorList>
    </citation>
    <scope>NUCLEOTIDE SEQUENCE [LARGE SCALE MRNA]</scope>
    <source>
        <tissue>Testis</tissue>
    </source>
</reference>
<keyword id="KW-1185">Reference proteome</keyword>
<gene>
    <name type="primary">ZNF295-AS1</name>
    <name type="synonym">C21orf121</name>
    <name type="synonym">NCRNA00318</name>
    <name type="ORF">PRED87</name>
</gene>
<name>ZNAS1_HUMAN</name>
<organism>
    <name type="scientific">Homo sapiens</name>
    <name type="common">Human</name>
    <dbReference type="NCBI Taxonomy" id="9606"/>
    <lineage>
        <taxon>Eukaryota</taxon>
        <taxon>Metazoa</taxon>
        <taxon>Chordata</taxon>
        <taxon>Craniata</taxon>
        <taxon>Vertebrata</taxon>
        <taxon>Euteleostomi</taxon>
        <taxon>Mammalia</taxon>
        <taxon>Eutheria</taxon>
        <taxon>Euarchontoglires</taxon>
        <taxon>Primates</taxon>
        <taxon>Haplorrhini</taxon>
        <taxon>Catarrhini</taxon>
        <taxon>Hominidae</taxon>
        <taxon>Homo</taxon>
    </lineage>
</organism>
<sequence length="137" mass="14971">MKDKMWCEDTAQPHRRLPAPPSSSSPTVVFQSHRRLLAPPSSSWTLWVAPRCGCCSPLCPKRVCASLCRVLAVTWSLTKLPFPLSPILLSRPGWLPQPSSPGPACAEPSSQEGGDTDLRSYGCFVCGWAWPTLSPRP</sequence>
<evidence type="ECO:0000256" key="1">
    <source>
        <dbReference type="SAM" id="MobiDB-lite"/>
    </source>
</evidence>
<evidence type="ECO:0000305" key="2"/>
<proteinExistence type="uncertain"/>
<feature type="chain" id="PRO_0000079551" description="Putative uncharacterized protein ZNF295-AS1">
    <location>
        <begin position="1"/>
        <end position="137"/>
    </location>
</feature>
<feature type="region of interest" description="Disordered" evidence="1">
    <location>
        <begin position="1"/>
        <end position="26"/>
    </location>
</feature>
<feature type="sequence conflict" description="In Ref. 2; BC029588." evidence="2" ref="2">
    <original>S</original>
    <variation>P</variation>
    <location>
        <position position="32"/>
    </location>
</feature>
<comment type="caution">
    <text evidence="2">Product of a dubious CDS prediction. May be a non-coding RNA.</text>
</comment>
<protein>
    <recommendedName>
        <fullName>Putative uncharacterized protein ZNF295-AS1</fullName>
    </recommendedName>
    <alternativeName>
        <fullName>ZNF295 antisense RNA 1</fullName>
    </alternativeName>
    <alternativeName>
        <fullName>ZNF295 antisense gene protein 1</fullName>
    </alternativeName>
</protein>